<gene>
    <name type="primary">uxuA2</name>
    <name type="ordered locus">BH0706</name>
</gene>
<evidence type="ECO:0000250" key="1"/>
<evidence type="ECO:0000305" key="2"/>
<feature type="chain" id="PRO_0000170661" description="Mannonate dehydratase 2">
    <location>
        <begin position="1"/>
        <end position="345"/>
    </location>
</feature>
<proteinExistence type="inferred from homology"/>
<dbReference type="EC" id="4.2.1.8"/>
<dbReference type="EMBL" id="BA000004">
    <property type="protein sequence ID" value="BAB04425.1"/>
    <property type="molecule type" value="Genomic_DNA"/>
</dbReference>
<dbReference type="PIR" id="B83738">
    <property type="entry name" value="B83738"/>
</dbReference>
<dbReference type="RefSeq" id="WP_010896879.1">
    <property type="nucleotide sequence ID" value="NC_002570.2"/>
</dbReference>
<dbReference type="SMR" id="Q9KEZ3"/>
<dbReference type="STRING" id="272558.gene:10726580"/>
<dbReference type="KEGG" id="bha:BH0706"/>
<dbReference type="eggNOG" id="COG1312">
    <property type="taxonomic scope" value="Bacteria"/>
</dbReference>
<dbReference type="HOGENOM" id="CLU_058621_1_0_9"/>
<dbReference type="OrthoDB" id="9780250at2"/>
<dbReference type="UniPathway" id="UPA00246"/>
<dbReference type="Proteomes" id="UP000001258">
    <property type="component" value="Chromosome"/>
</dbReference>
<dbReference type="GO" id="GO:0008198">
    <property type="term" value="F:ferrous iron binding"/>
    <property type="evidence" value="ECO:0007669"/>
    <property type="project" value="TreeGrafter"/>
</dbReference>
<dbReference type="GO" id="GO:0030145">
    <property type="term" value="F:manganese ion binding"/>
    <property type="evidence" value="ECO:0007669"/>
    <property type="project" value="TreeGrafter"/>
</dbReference>
<dbReference type="GO" id="GO:0008927">
    <property type="term" value="F:mannonate dehydratase activity"/>
    <property type="evidence" value="ECO:0007669"/>
    <property type="project" value="UniProtKB-UniRule"/>
</dbReference>
<dbReference type="GO" id="GO:0042840">
    <property type="term" value="P:D-glucuronate catabolic process"/>
    <property type="evidence" value="ECO:0007669"/>
    <property type="project" value="TreeGrafter"/>
</dbReference>
<dbReference type="Gene3D" id="3.20.20.150">
    <property type="entry name" value="Divalent-metal-dependent TIM barrel enzymes"/>
    <property type="match status" value="1"/>
</dbReference>
<dbReference type="HAMAP" id="MF_00106">
    <property type="entry name" value="UxuA"/>
    <property type="match status" value="1"/>
</dbReference>
<dbReference type="InterPro" id="IPR004628">
    <property type="entry name" value="Man_deHydtase"/>
</dbReference>
<dbReference type="InterPro" id="IPR036237">
    <property type="entry name" value="Xyl_isomerase-like_sf"/>
</dbReference>
<dbReference type="NCBIfam" id="NF003027">
    <property type="entry name" value="PRK03906.1"/>
    <property type="match status" value="2"/>
</dbReference>
<dbReference type="NCBIfam" id="TIGR00695">
    <property type="entry name" value="uxuA"/>
    <property type="match status" value="1"/>
</dbReference>
<dbReference type="PANTHER" id="PTHR30387">
    <property type="entry name" value="MANNONATE DEHYDRATASE"/>
    <property type="match status" value="1"/>
</dbReference>
<dbReference type="PANTHER" id="PTHR30387:SF2">
    <property type="entry name" value="MANNONATE DEHYDRATASE"/>
    <property type="match status" value="1"/>
</dbReference>
<dbReference type="Pfam" id="PF03786">
    <property type="entry name" value="UxuA"/>
    <property type="match status" value="1"/>
</dbReference>
<dbReference type="PIRSF" id="PIRSF016049">
    <property type="entry name" value="Man_dehyd"/>
    <property type="match status" value="1"/>
</dbReference>
<dbReference type="SUPFAM" id="SSF51658">
    <property type="entry name" value="Xylose isomerase-like"/>
    <property type="match status" value="1"/>
</dbReference>
<comment type="function">
    <text evidence="1">Catalyzes the dehydration of D-mannonate.</text>
</comment>
<comment type="catalytic activity">
    <reaction>
        <text>D-mannonate = 2-dehydro-3-deoxy-D-gluconate + H2O</text>
        <dbReference type="Rhea" id="RHEA:20097"/>
        <dbReference type="ChEBI" id="CHEBI:15377"/>
        <dbReference type="ChEBI" id="CHEBI:17767"/>
        <dbReference type="ChEBI" id="CHEBI:57990"/>
        <dbReference type="EC" id="4.2.1.8"/>
    </reaction>
</comment>
<comment type="cofactor">
    <cofactor evidence="1">
        <name>Fe(2+)</name>
        <dbReference type="ChEBI" id="CHEBI:29033"/>
    </cofactor>
    <cofactor evidence="1">
        <name>Mn(2+)</name>
        <dbReference type="ChEBI" id="CHEBI:29035"/>
    </cofactor>
</comment>
<comment type="pathway">
    <text>Carbohydrate metabolism; pentose and glucuronate interconversion.</text>
</comment>
<comment type="similarity">
    <text evidence="2">Belongs to the mannonate dehydratase family.</text>
</comment>
<keyword id="KW-0408">Iron</keyword>
<keyword id="KW-0456">Lyase</keyword>
<keyword id="KW-0464">Manganese</keyword>
<keyword id="KW-1185">Reference proteome</keyword>
<sequence>MRLTMRWFGPSDKVKLEYIKQIPGMKGIVSAIYDVAVGGVWPKEKILALKNNIERHGLTLDVIESVPVHEDIKLGKPTRDRYIENYKQTLRHLAECGIDTVCYNFMPVFDWTRSQLDFKLEDGSEALIYEEDVISRTNPLSGELELPGWDTSYENESLKGVLQAYKKISEEDLWDHLTYFVQAIMPVADEVGIKMAIHPDDPPWSIFGLPRIVTNKANLERLLSLYDSPNHGITMCSGSLGANEANDLPEMIRHFGGQGRIHFAHARNIKRTGPRSFQESAHLSEAGSVNMVAMLKAYHDIGFTGPLRPDHGRMIWGEKGRPGYGLYDRALGATYLNGIWEAVSS</sequence>
<name>UXUA2_HALH5</name>
<organism>
    <name type="scientific">Halalkalibacterium halodurans (strain ATCC BAA-125 / DSM 18197 / FERM 7344 / JCM 9153 / C-125)</name>
    <name type="common">Bacillus halodurans</name>
    <dbReference type="NCBI Taxonomy" id="272558"/>
    <lineage>
        <taxon>Bacteria</taxon>
        <taxon>Bacillati</taxon>
        <taxon>Bacillota</taxon>
        <taxon>Bacilli</taxon>
        <taxon>Bacillales</taxon>
        <taxon>Bacillaceae</taxon>
        <taxon>Halalkalibacterium (ex Joshi et al. 2022)</taxon>
    </lineage>
</organism>
<protein>
    <recommendedName>
        <fullName>Mannonate dehydratase 2</fullName>
        <ecNumber>4.2.1.8</ecNumber>
    </recommendedName>
    <alternativeName>
        <fullName>D-mannonate hydro-lyase 2</fullName>
    </alternativeName>
</protein>
<accession>Q9KEZ3</accession>
<reference key="1">
    <citation type="journal article" date="2000" name="Nucleic Acids Res.">
        <title>Complete genome sequence of the alkaliphilic bacterium Bacillus halodurans and genomic sequence comparison with Bacillus subtilis.</title>
        <authorList>
            <person name="Takami H."/>
            <person name="Nakasone K."/>
            <person name="Takaki Y."/>
            <person name="Maeno G."/>
            <person name="Sasaki R."/>
            <person name="Masui N."/>
            <person name="Fuji F."/>
            <person name="Hirama C."/>
            <person name="Nakamura Y."/>
            <person name="Ogasawara N."/>
            <person name="Kuhara S."/>
            <person name="Horikoshi K."/>
        </authorList>
    </citation>
    <scope>NUCLEOTIDE SEQUENCE [LARGE SCALE GENOMIC DNA]</scope>
    <source>
        <strain>ATCC BAA-125 / DSM 18197 / FERM 7344 / JCM 9153 / C-125</strain>
    </source>
</reference>